<proteinExistence type="inferred from homology"/>
<reference key="1">
    <citation type="journal article" date="2003" name="Nat. Biotechnol.">
        <title>The genome sequence of the entomopathogenic bacterium Photorhabdus luminescens.</title>
        <authorList>
            <person name="Duchaud E."/>
            <person name="Rusniok C."/>
            <person name="Frangeul L."/>
            <person name="Buchrieser C."/>
            <person name="Givaudan A."/>
            <person name="Taourit S."/>
            <person name="Bocs S."/>
            <person name="Boursaux-Eude C."/>
            <person name="Chandler M."/>
            <person name="Charles J.-F."/>
            <person name="Dassa E."/>
            <person name="Derose R."/>
            <person name="Derzelle S."/>
            <person name="Freyssinet G."/>
            <person name="Gaudriault S."/>
            <person name="Medigue C."/>
            <person name="Lanois A."/>
            <person name="Powell K."/>
            <person name="Siguier P."/>
            <person name="Vincent R."/>
            <person name="Wingate V."/>
            <person name="Zouine M."/>
            <person name="Glaser P."/>
            <person name="Boemare N."/>
            <person name="Danchin A."/>
            <person name="Kunst F."/>
        </authorList>
    </citation>
    <scope>NUCLEOTIDE SEQUENCE [LARGE SCALE GENOMIC DNA]</scope>
    <source>
        <strain>DSM 15139 / CIP 105565 / TT01</strain>
    </source>
</reference>
<keyword id="KW-0010">Activator</keyword>
<keyword id="KW-0238">DNA-binding</keyword>
<keyword id="KW-1185">Reference proteome</keyword>
<keyword id="KW-0678">Repressor</keyword>
<keyword id="KW-0804">Transcription</keyword>
<keyword id="KW-0805">Transcription regulation</keyword>
<accession>Q7N125</accession>
<name>SGRR_PHOLL</name>
<feature type="chain" id="PRO_0000309246" description="HTH-type transcriptional regulator SgrR">
    <location>
        <begin position="1"/>
        <end position="553"/>
    </location>
</feature>
<feature type="domain" description="HTH marR-type" evidence="1">
    <location>
        <begin position="1"/>
        <end position="117"/>
    </location>
</feature>
<feature type="DNA-binding region" description="H-T-H motif" evidence="1">
    <location>
        <begin position="26"/>
        <end position="49"/>
    </location>
</feature>
<feature type="region of interest" description="Solute-binding" evidence="1">
    <location>
        <begin position="163"/>
        <end position="494"/>
    </location>
</feature>
<gene>
    <name evidence="1" type="primary">sgrR</name>
    <name type="ordered locus">plu3677</name>
</gene>
<dbReference type="EMBL" id="BX571871">
    <property type="protein sequence ID" value="CAE16050.1"/>
    <property type="molecule type" value="Genomic_DNA"/>
</dbReference>
<dbReference type="RefSeq" id="WP_011147840.1">
    <property type="nucleotide sequence ID" value="NC_005126.1"/>
</dbReference>
<dbReference type="SMR" id="Q7N125"/>
<dbReference type="STRING" id="243265.plu3677"/>
<dbReference type="GeneID" id="48849920"/>
<dbReference type="KEGG" id="plu:plu3677"/>
<dbReference type="eggNOG" id="COG4533">
    <property type="taxonomic scope" value="Bacteria"/>
</dbReference>
<dbReference type="HOGENOM" id="CLU_017028_12_3_6"/>
<dbReference type="OrthoDB" id="5894719at2"/>
<dbReference type="Proteomes" id="UP000002514">
    <property type="component" value="Chromosome"/>
</dbReference>
<dbReference type="GO" id="GO:0003677">
    <property type="term" value="F:DNA binding"/>
    <property type="evidence" value="ECO:0007669"/>
    <property type="project" value="UniProtKB-KW"/>
</dbReference>
<dbReference type="GO" id="GO:1904680">
    <property type="term" value="F:peptide transmembrane transporter activity"/>
    <property type="evidence" value="ECO:0007669"/>
    <property type="project" value="TreeGrafter"/>
</dbReference>
<dbReference type="GO" id="GO:0045892">
    <property type="term" value="P:negative regulation of DNA-templated transcription"/>
    <property type="evidence" value="ECO:0007669"/>
    <property type="project" value="UniProtKB-UniRule"/>
</dbReference>
<dbReference type="GO" id="GO:0015833">
    <property type="term" value="P:peptide transport"/>
    <property type="evidence" value="ECO:0007669"/>
    <property type="project" value="TreeGrafter"/>
</dbReference>
<dbReference type="GO" id="GO:0045893">
    <property type="term" value="P:positive regulation of DNA-templated transcription"/>
    <property type="evidence" value="ECO:0007669"/>
    <property type="project" value="UniProtKB-UniRule"/>
</dbReference>
<dbReference type="CDD" id="cd08507">
    <property type="entry name" value="PBP2_SgrR_like"/>
    <property type="match status" value="1"/>
</dbReference>
<dbReference type="FunFam" id="3.40.190.10:FF:000070">
    <property type="entry name" value="HTH-type transcriptional regulator SgrR"/>
    <property type="match status" value="1"/>
</dbReference>
<dbReference type="Gene3D" id="3.40.190.10">
    <property type="entry name" value="Periplasmic binding protein-like II"/>
    <property type="match status" value="1"/>
</dbReference>
<dbReference type="HAMAP" id="MF_01449">
    <property type="entry name" value="HTH_type_SgrR"/>
    <property type="match status" value="1"/>
</dbReference>
<dbReference type="InterPro" id="IPR039424">
    <property type="entry name" value="SBP_5"/>
</dbReference>
<dbReference type="InterPro" id="IPR000914">
    <property type="entry name" value="SBP_5_dom"/>
</dbReference>
<dbReference type="InterPro" id="IPR025370">
    <property type="entry name" value="SgrR_HTH_N"/>
</dbReference>
<dbReference type="InterPro" id="IPR023767">
    <property type="entry name" value="Tscrpt_reg_SgrR"/>
</dbReference>
<dbReference type="InterPro" id="IPR036390">
    <property type="entry name" value="WH_DNA-bd_sf"/>
</dbReference>
<dbReference type="NCBIfam" id="NF010149">
    <property type="entry name" value="PRK13626.1"/>
    <property type="match status" value="1"/>
</dbReference>
<dbReference type="PANTHER" id="PTHR30290:SF72">
    <property type="entry name" value="HTH-TYPE TRANSCRIPTIONAL REGULATOR SGRR"/>
    <property type="match status" value="1"/>
</dbReference>
<dbReference type="PANTHER" id="PTHR30290">
    <property type="entry name" value="PERIPLASMIC BINDING COMPONENT OF ABC TRANSPORTER"/>
    <property type="match status" value="1"/>
</dbReference>
<dbReference type="Pfam" id="PF00496">
    <property type="entry name" value="SBP_bac_5"/>
    <property type="match status" value="1"/>
</dbReference>
<dbReference type="Pfam" id="PF12793">
    <property type="entry name" value="SgrR_N"/>
    <property type="match status" value="1"/>
</dbReference>
<dbReference type="SUPFAM" id="SSF53850">
    <property type="entry name" value="Periplasmic binding protein-like II"/>
    <property type="match status" value="1"/>
</dbReference>
<dbReference type="SUPFAM" id="SSF46785">
    <property type="entry name" value="Winged helix' DNA-binding domain"/>
    <property type="match status" value="1"/>
</dbReference>
<sequence>MPSSRLQQQFIRLWQHHQGKEAETTLQELANVLHCSKRHIRSLLNNMQKAGWLQWQAESGRGKRSQLNFLRDGWELQQQRAEELLEQHNVEKLVQLVGDKDTVRHMVLSQIERRFRQGKNLLRILYYRPFPNLLPGSPLRRSEIHLVRQIFNSLTRINEENGEPEADLAHHWQQLSSNHWRFYLRPAIHFHHGRELQMADVIASLQRLRNLPLFSHIEKVTTPTPYVIDIFLSEPDLWLSLLIGSPHAMILPQEWQKLPNFSRMPVGTGPYQVIKNSAQKLQIRAFDNYFGFRALIDQVNIWFLPELAEKLVCTTLHLESDSTDNNSLDSRIEEGCYFLLHDHRSTKCKREDVRQWLCSLLTPINLLAHCDPFYQRHWSPAYGLLLRWHHSKLISELNKPEDITHLTVTLCHQHHEYHTISQILQAILTKCGVELKINIVDYDTWFNGNTESDFWLATANFYNPLEFSLFATLYEMPLLKKCLGNDLSKEVSQWRRQELSLEEWCEKIVDEHWLHPLFHHWLELQGQRSMRGVKMNTFGWFDFKSAWFNPYEG</sequence>
<protein>
    <recommendedName>
        <fullName evidence="1">HTH-type transcriptional regulator SgrR</fullName>
    </recommendedName>
</protein>
<comment type="function">
    <text evidence="1">Activates the small RNA gene sgrS under glucose-phosphate stress conditions as well as yfdZ. Represses its own transcription under both stress and non-stress conditions. Might act as a sensor of the intracellular accumulation of phosphoglucose by binding these molecules in its C-terminal solute-binding domain.</text>
</comment>
<organism>
    <name type="scientific">Photorhabdus laumondii subsp. laumondii (strain DSM 15139 / CIP 105565 / TT01)</name>
    <name type="common">Photorhabdus luminescens subsp. laumondii</name>
    <dbReference type="NCBI Taxonomy" id="243265"/>
    <lineage>
        <taxon>Bacteria</taxon>
        <taxon>Pseudomonadati</taxon>
        <taxon>Pseudomonadota</taxon>
        <taxon>Gammaproteobacteria</taxon>
        <taxon>Enterobacterales</taxon>
        <taxon>Morganellaceae</taxon>
        <taxon>Photorhabdus</taxon>
    </lineage>
</organism>
<evidence type="ECO:0000255" key="1">
    <source>
        <dbReference type="HAMAP-Rule" id="MF_01449"/>
    </source>
</evidence>